<proteinExistence type="inferred from homology"/>
<feature type="chain" id="PRO_1000016677" description="tRNA uridine 5-carboxymethylaminomethyl modification enzyme MnmG">
    <location>
        <begin position="1"/>
        <end position="629"/>
    </location>
</feature>
<feature type="binding site" evidence="1">
    <location>
        <begin position="13"/>
        <end position="18"/>
    </location>
    <ligand>
        <name>FAD</name>
        <dbReference type="ChEBI" id="CHEBI:57692"/>
    </ligand>
</feature>
<feature type="binding site" evidence="1">
    <location>
        <position position="125"/>
    </location>
    <ligand>
        <name>FAD</name>
        <dbReference type="ChEBI" id="CHEBI:57692"/>
    </ligand>
</feature>
<feature type="binding site" evidence="1">
    <location>
        <position position="180"/>
    </location>
    <ligand>
        <name>FAD</name>
        <dbReference type="ChEBI" id="CHEBI:57692"/>
    </ligand>
</feature>
<feature type="binding site" evidence="1">
    <location>
        <begin position="273"/>
        <end position="287"/>
    </location>
    <ligand>
        <name>NAD(+)</name>
        <dbReference type="ChEBI" id="CHEBI:57540"/>
    </ligand>
</feature>
<feature type="binding site" evidence="1">
    <location>
        <position position="370"/>
    </location>
    <ligand>
        <name>FAD</name>
        <dbReference type="ChEBI" id="CHEBI:57692"/>
    </ligand>
</feature>
<name>MNMG_SHESR</name>
<organism>
    <name type="scientific">Shewanella sp. (strain MR-7)</name>
    <dbReference type="NCBI Taxonomy" id="60481"/>
    <lineage>
        <taxon>Bacteria</taxon>
        <taxon>Pseudomonadati</taxon>
        <taxon>Pseudomonadota</taxon>
        <taxon>Gammaproteobacteria</taxon>
        <taxon>Alteromonadales</taxon>
        <taxon>Shewanellaceae</taxon>
        <taxon>Shewanella</taxon>
    </lineage>
</organism>
<accession>Q0HPF0</accession>
<evidence type="ECO:0000255" key="1">
    <source>
        <dbReference type="HAMAP-Rule" id="MF_00129"/>
    </source>
</evidence>
<comment type="function">
    <text evidence="1">NAD-binding protein involved in the addition of a carboxymethylaminomethyl (cmnm) group at the wobble position (U34) of certain tRNAs, forming tRNA-cmnm(5)s(2)U34.</text>
</comment>
<comment type="cofactor">
    <cofactor evidence="1">
        <name>FAD</name>
        <dbReference type="ChEBI" id="CHEBI:57692"/>
    </cofactor>
</comment>
<comment type="subunit">
    <text evidence="1">Homodimer. Heterotetramer of two MnmE and two MnmG subunits.</text>
</comment>
<comment type="subcellular location">
    <subcellularLocation>
        <location evidence="1">Cytoplasm</location>
    </subcellularLocation>
</comment>
<comment type="similarity">
    <text evidence="1">Belongs to the MnmG family.</text>
</comment>
<reference key="1">
    <citation type="submission" date="2006-08" db="EMBL/GenBank/DDBJ databases">
        <title>Complete sequence of chromosome 1 of Shewanella sp. MR-7.</title>
        <authorList>
            <person name="Copeland A."/>
            <person name="Lucas S."/>
            <person name="Lapidus A."/>
            <person name="Barry K."/>
            <person name="Detter J.C."/>
            <person name="Glavina del Rio T."/>
            <person name="Hammon N."/>
            <person name="Israni S."/>
            <person name="Dalin E."/>
            <person name="Tice H."/>
            <person name="Pitluck S."/>
            <person name="Kiss H."/>
            <person name="Brettin T."/>
            <person name="Bruce D."/>
            <person name="Han C."/>
            <person name="Tapia R."/>
            <person name="Gilna P."/>
            <person name="Schmutz J."/>
            <person name="Larimer F."/>
            <person name="Land M."/>
            <person name="Hauser L."/>
            <person name="Kyrpides N."/>
            <person name="Mikhailova N."/>
            <person name="Nealson K."/>
            <person name="Konstantinidis K."/>
            <person name="Klappenbach J."/>
            <person name="Tiedje J."/>
            <person name="Richardson P."/>
        </authorList>
    </citation>
    <scope>NUCLEOTIDE SEQUENCE [LARGE SCALE GENOMIC DNA]</scope>
    <source>
        <strain>MR-7</strain>
    </source>
</reference>
<dbReference type="EMBL" id="CP000444">
    <property type="protein sequence ID" value="ABI45005.1"/>
    <property type="molecule type" value="Genomic_DNA"/>
</dbReference>
<dbReference type="SMR" id="Q0HPF0"/>
<dbReference type="KEGG" id="shm:Shewmr7_4028"/>
<dbReference type="HOGENOM" id="CLU_007831_2_2_6"/>
<dbReference type="GO" id="GO:0005829">
    <property type="term" value="C:cytosol"/>
    <property type="evidence" value="ECO:0007669"/>
    <property type="project" value="TreeGrafter"/>
</dbReference>
<dbReference type="GO" id="GO:0050660">
    <property type="term" value="F:flavin adenine dinucleotide binding"/>
    <property type="evidence" value="ECO:0007669"/>
    <property type="project" value="UniProtKB-UniRule"/>
</dbReference>
<dbReference type="GO" id="GO:0030488">
    <property type="term" value="P:tRNA methylation"/>
    <property type="evidence" value="ECO:0007669"/>
    <property type="project" value="TreeGrafter"/>
</dbReference>
<dbReference type="GO" id="GO:0002098">
    <property type="term" value="P:tRNA wobble uridine modification"/>
    <property type="evidence" value="ECO:0007669"/>
    <property type="project" value="InterPro"/>
</dbReference>
<dbReference type="FunFam" id="1.10.10.1800:FF:000001">
    <property type="entry name" value="tRNA uridine 5-carboxymethylaminomethyl modification enzyme MnmG"/>
    <property type="match status" value="1"/>
</dbReference>
<dbReference type="FunFam" id="1.10.150.570:FF:000001">
    <property type="entry name" value="tRNA uridine 5-carboxymethylaminomethyl modification enzyme MnmG"/>
    <property type="match status" value="1"/>
</dbReference>
<dbReference type="FunFam" id="3.50.50.60:FF:000002">
    <property type="entry name" value="tRNA uridine 5-carboxymethylaminomethyl modification enzyme MnmG"/>
    <property type="match status" value="1"/>
</dbReference>
<dbReference type="FunFam" id="3.50.50.60:FF:000010">
    <property type="entry name" value="tRNA uridine 5-carboxymethylaminomethyl modification enzyme MnmG"/>
    <property type="match status" value="1"/>
</dbReference>
<dbReference type="Gene3D" id="3.50.50.60">
    <property type="entry name" value="FAD/NAD(P)-binding domain"/>
    <property type="match status" value="2"/>
</dbReference>
<dbReference type="Gene3D" id="1.10.150.570">
    <property type="entry name" value="GidA associated domain, C-terminal subdomain"/>
    <property type="match status" value="1"/>
</dbReference>
<dbReference type="Gene3D" id="1.10.10.1800">
    <property type="entry name" value="tRNA uridine 5-carboxymethylaminomethyl modification enzyme MnmG/GidA"/>
    <property type="match status" value="1"/>
</dbReference>
<dbReference type="HAMAP" id="MF_00129">
    <property type="entry name" value="MnmG_GidA"/>
    <property type="match status" value="1"/>
</dbReference>
<dbReference type="InterPro" id="IPR036188">
    <property type="entry name" value="FAD/NAD-bd_sf"/>
</dbReference>
<dbReference type="InterPro" id="IPR049312">
    <property type="entry name" value="GIDA_C_N"/>
</dbReference>
<dbReference type="InterPro" id="IPR004416">
    <property type="entry name" value="MnmG"/>
</dbReference>
<dbReference type="InterPro" id="IPR002218">
    <property type="entry name" value="MnmG-rel"/>
</dbReference>
<dbReference type="InterPro" id="IPR020595">
    <property type="entry name" value="MnmG-rel_CS"/>
</dbReference>
<dbReference type="InterPro" id="IPR026904">
    <property type="entry name" value="MnmG_C"/>
</dbReference>
<dbReference type="InterPro" id="IPR047001">
    <property type="entry name" value="MnmG_C_subdom"/>
</dbReference>
<dbReference type="InterPro" id="IPR044920">
    <property type="entry name" value="MnmG_C_subdom_sf"/>
</dbReference>
<dbReference type="InterPro" id="IPR040131">
    <property type="entry name" value="MnmG_N"/>
</dbReference>
<dbReference type="NCBIfam" id="TIGR00136">
    <property type="entry name" value="mnmG_gidA"/>
    <property type="match status" value="1"/>
</dbReference>
<dbReference type="PANTHER" id="PTHR11806">
    <property type="entry name" value="GLUCOSE INHIBITED DIVISION PROTEIN A"/>
    <property type="match status" value="1"/>
</dbReference>
<dbReference type="PANTHER" id="PTHR11806:SF0">
    <property type="entry name" value="PROTEIN MTO1 HOMOLOG, MITOCHONDRIAL"/>
    <property type="match status" value="1"/>
</dbReference>
<dbReference type="Pfam" id="PF01134">
    <property type="entry name" value="GIDA"/>
    <property type="match status" value="1"/>
</dbReference>
<dbReference type="Pfam" id="PF21680">
    <property type="entry name" value="GIDA_C_1st"/>
    <property type="match status" value="1"/>
</dbReference>
<dbReference type="Pfam" id="PF13932">
    <property type="entry name" value="SAM_GIDA_C"/>
    <property type="match status" value="1"/>
</dbReference>
<dbReference type="SMART" id="SM01228">
    <property type="entry name" value="GIDA_assoc_3"/>
    <property type="match status" value="1"/>
</dbReference>
<dbReference type="SUPFAM" id="SSF51905">
    <property type="entry name" value="FAD/NAD(P)-binding domain"/>
    <property type="match status" value="1"/>
</dbReference>
<dbReference type="PROSITE" id="PS01280">
    <property type="entry name" value="GIDA_1"/>
    <property type="match status" value="1"/>
</dbReference>
<dbReference type="PROSITE" id="PS01281">
    <property type="entry name" value="GIDA_2"/>
    <property type="match status" value="1"/>
</dbReference>
<protein>
    <recommendedName>
        <fullName evidence="1">tRNA uridine 5-carboxymethylaminomethyl modification enzyme MnmG</fullName>
    </recommendedName>
    <alternativeName>
        <fullName evidence="1">Glucose-inhibited division protein A</fullName>
    </alternativeName>
</protein>
<keyword id="KW-0963">Cytoplasm</keyword>
<keyword id="KW-0274">FAD</keyword>
<keyword id="KW-0285">Flavoprotein</keyword>
<keyword id="KW-0520">NAD</keyword>
<keyword id="KW-0819">tRNA processing</keyword>
<gene>
    <name evidence="1" type="primary">mnmG</name>
    <name evidence="1" type="synonym">gidA</name>
    <name type="ordered locus">Shewmr7_4028</name>
</gene>
<sequence length="629" mass="69301">MHFHERFDVIVVGGGHAGTEAALAAARMGSKTLLLTHNLDTLGQMSCNPAIGGIGKGHLVKEIDALGGAMAIATDYAGIQFRTLNSSKGPAVRATRAQADRALYRQKIQNILQNQPNLRIFQQAVDDLVVENDRVVGVITQMGLAFEAPAVVLTAGTFLSGKIHIGLENYSGGRAGDPPSIALAHRLRELPIRVGRLKTGTPPRIDANTIDFTQMTEQKGDTPLPVMSFMGDVSHHPKQISCWITHTNEKTHDIIRGGLDRSPMYSGVIEGIGPRYCPSIEDKIHRFSDKSSHQIFIEPEGLNTNEIYPNGISTSLPFDVQLNLVRSIQGMENAEIVRPGYAIEYDYFDPRDLKNSLETKTINGLFFAGQINGTTGYEEAGAQGLLAGMNAALQVQGKEAWCPRRDEAYIGVLVDDLSTLGTKEPYRMFTSRAEYRLLLREDNADLRLTAKGRELGLVDDARWASFSEKLESIELELQRLRSQWIHPNSPLVPVLNPHLNTPISREASFEELLRRPEMDYSKLMQIEGFGPGLADPLAAEQVQIQVKYSGYIQRQQEEINKAVRNENTGLPLNLDYKEVPGLSNEVIAKLNSHKPETIGQASRISGITPAAISILLVHLKKRGLLRKSA</sequence>